<keyword id="KW-0414">Isoprene biosynthesis</keyword>
<keyword id="KW-0456">Lyase</keyword>
<organism>
    <name type="scientific">Pyrococcus horikoshii (strain ATCC 700860 / DSM 12428 / JCM 9974 / NBRC 100139 / OT-3)</name>
    <dbReference type="NCBI Taxonomy" id="70601"/>
    <lineage>
        <taxon>Archaea</taxon>
        <taxon>Methanobacteriati</taxon>
        <taxon>Methanobacteriota</taxon>
        <taxon>Thermococci</taxon>
        <taxon>Thermococcales</taxon>
        <taxon>Thermococcaceae</taxon>
        <taxon>Pyrococcus</taxon>
    </lineage>
</organism>
<sequence>MKLKGKGIGKVVVEGEVIVSRKPLSFLGGVDPETGTITDPESDIKGESITGKILVFPKGKGSTVGSYILYALSKNGKGPKAIIVEEAEPIVTAGAIISGIPLITNVDISKLKTGMRVRINPQEGEVEILAEGNL</sequence>
<accession>O58091</accession>
<comment type="function">
    <text evidence="1">Component of a hydro-lyase that catalyzes the dehydration of mevalonate 5-phosphate (MVA5P) to form trans-anhydromevalonate 5-phosphate (tAHMP). Involved in the archaeal mevalonate (MVA) pathway, which provides fundamental precursors for isoprenoid biosynthesis, such as isopentenyl diphosphate (IPP) and dimethylallyl diphosphate (DMAPP).</text>
</comment>
<comment type="catalytic activity">
    <reaction evidence="1">
        <text>(R)-5-phosphomevalonate = (2E)-3-methyl-5-phosphooxypent-2-enoate + H2O</text>
        <dbReference type="Rhea" id="RHEA:78975"/>
        <dbReference type="ChEBI" id="CHEBI:15377"/>
        <dbReference type="ChEBI" id="CHEBI:58146"/>
        <dbReference type="ChEBI" id="CHEBI:229665"/>
        <dbReference type="EC" id="4.2.1.182"/>
    </reaction>
    <physiologicalReaction direction="left-to-right" evidence="1">
        <dbReference type="Rhea" id="RHEA:78976"/>
    </physiologicalReaction>
</comment>
<comment type="pathway">
    <text evidence="1">Isoprenoid biosynthesis; isopentenyl diphosphate biosynthesis via mevalonate pathway.</text>
</comment>
<comment type="subunit">
    <text evidence="1">Heterodimer composed of a large subunit (PMDh-L) and a small subunit (PMDh-S).</text>
</comment>
<comment type="similarity">
    <text evidence="1">Belongs to the AcnX type II small subunit family.</text>
</comment>
<protein>
    <recommendedName>
        <fullName evidence="1">Phosphomevalonate dehydratase small subunit</fullName>
        <shortName evidence="1">PMDh small subunit</shortName>
        <shortName evidence="1">PMDh-S</shortName>
        <ecNumber evidence="1">4.2.1.182</ecNumber>
    </recommendedName>
</protein>
<feature type="chain" id="PRO_0000152571" description="Phosphomevalonate dehydratase small subunit">
    <location>
        <begin position="1"/>
        <end position="134"/>
    </location>
</feature>
<feature type="active site" description="Proton acceptor" evidence="1">
    <location>
        <position position="62"/>
    </location>
</feature>
<name>PMDHS_PYRHO</name>
<proteinExistence type="inferred from homology"/>
<evidence type="ECO:0000255" key="1">
    <source>
        <dbReference type="HAMAP-Rule" id="MF_00078"/>
    </source>
</evidence>
<gene>
    <name type="ordered locus">PH0353</name>
</gene>
<reference key="1">
    <citation type="journal article" date="1998" name="DNA Res.">
        <title>Complete sequence and gene organization of the genome of a hyper-thermophilic archaebacterium, Pyrococcus horikoshii OT3.</title>
        <authorList>
            <person name="Kawarabayasi Y."/>
            <person name="Sawada M."/>
            <person name="Horikawa H."/>
            <person name="Haikawa Y."/>
            <person name="Hino Y."/>
            <person name="Yamamoto S."/>
            <person name="Sekine M."/>
            <person name="Baba S."/>
            <person name="Kosugi H."/>
            <person name="Hosoyama A."/>
            <person name="Nagai Y."/>
            <person name="Sakai M."/>
            <person name="Ogura K."/>
            <person name="Otsuka R."/>
            <person name="Nakazawa H."/>
            <person name="Takamiya M."/>
            <person name="Ohfuku Y."/>
            <person name="Funahashi T."/>
            <person name="Tanaka T."/>
            <person name="Kudoh Y."/>
            <person name="Yamazaki J."/>
            <person name="Kushida N."/>
            <person name="Oguchi A."/>
            <person name="Aoki K."/>
            <person name="Yoshizawa T."/>
            <person name="Nakamura Y."/>
            <person name="Robb F.T."/>
            <person name="Horikoshi K."/>
            <person name="Masuchi Y."/>
            <person name="Shizuya H."/>
            <person name="Kikuchi H."/>
        </authorList>
    </citation>
    <scope>NUCLEOTIDE SEQUENCE [LARGE SCALE GENOMIC DNA]</scope>
    <source>
        <strain>ATCC 700860 / DSM 12428 / JCM 9974 / NBRC 100139 / OT-3</strain>
    </source>
</reference>
<dbReference type="EC" id="4.2.1.182" evidence="1"/>
<dbReference type="EMBL" id="BA000001">
    <property type="protein sequence ID" value="BAA29427.1"/>
    <property type="molecule type" value="Genomic_DNA"/>
</dbReference>
<dbReference type="PIR" id="F71142">
    <property type="entry name" value="F71142"/>
</dbReference>
<dbReference type="RefSeq" id="WP_010884441.1">
    <property type="nucleotide sequence ID" value="NC_000961.1"/>
</dbReference>
<dbReference type="SMR" id="O58091"/>
<dbReference type="IntAct" id="O58091">
    <property type="interactions" value="1"/>
</dbReference>
<dbReference type="MINT" id="O58091"/>
<dbReference type="STRING" id="70601.gene:9377272"/>
<dbReference type="EnsemblBacteria" id="BAA29427">
    <property type="protein sequence ID" value="BAA29427"/>
    <property type="gene ID" value="BAA29427"/>
</dbReference>
<dbReference type="GeneID" id="1444228"/>
<dbReference type="KEGG" id="pho:PH0353"/>
<dbReference type="eggNOG" id="arCOG04279">
    <property type="taxonomic scope" value="Archaea"/>
</dbReference>
<dbReference type="OrthoDB" id="18062at2157"/>
<dbReference type="UniPathway" id="UPA00057"/>
<dbReference type="Proteomes" id="UP000000752">
    <property type="component" value="Chromosome"/>
</dbReference>
<dbReference type="GO" id="GO:0016836">
    <property type="term" value="F:hydro-lyase activity"/>
    <property type="evidence" value="ECO:0007669"/>
    <property type="project" value="UniProtKB-UniRule"/>
</dbReference>
<dbReference type="GO" id="GO:0019287">
    <property type="term" value="P:isopentenyl diphosphate biosynthetic process, mevalonate pathway"/>
    <property type="evidence" value="ECO:0007669"/>
    <property type="project" value="UniProtKB-UniRule"/>
</dbReference>
<dbReference type="CDD" id="cd01356">
    <property type="entry name" value="AcnX_swivel"/>
    <property type="match status" value="1"/>
</dbReference>
<dbReference type="Gene3D" id="3.50.30.10">
    <property type="entry name" value="Phosphohistidine domain"/>
    <property type="match status" value="1"/>
</dbReference>
<dbReference type="HAMAP" id="MF_00078">
    <property type="entry name" value="PMDh_S"/>
    <property type="match status" value="1"/>
</dbReference>
<dbReference type="InterPro" id="IPR012016">
    <property type="entry name" value="PMDh-S-like"/>
</dbReference>
<dbReference type="InterPro" id="IPR002840">
    <property type="entry name" value="PMDh-S-like_dom"/>
</dbReference>
<dbReference type="InterPro" id="IPR020794">
    <property type="entry name" value="PMDh_S"/>
</dbReference>
<dbReference type="NCBIfam" id="NF003046">
    <property type="entry name" value="PRK03955.1"/>
    <property type="match status" value="1"/>
</dbReference>
<dbReference type="PANTHER" id="PTHR36577">
    <property type="entry name" value="DUF521 DOMAIN PROTEIN (AFU_ORTHOLOGUE AFUA_6G00490)"/>
    <property type="match status" value="1"/>
</dbReference>
<dbReference type="PANTHER" id="PTHR36577:SF3">
    <property type="entry name" value="DUF521 DOMAIN PROTEIN (AFU_ORTHOLOGUE AFUA_6G00490)"/>
    <property type="match status" value="1"/>
</dbReference>
<dbReference type="Pfam" id="PF01989">
    <property type="entry name" value="AcnX_swivel_put"/>
    <property type="match status" value="1"/>
</dbReference>
<dbReference type="PIRSF" id="PIRSF004966">
    <property type="entry name" value="UCP004966"/>
    <property type="match status" value="1"/>
</dbReference>
<dbReference type="SUPFAM" id="SSF52016">
    <property type="entry name" value="LeuD/IlvD-like"/>
    <property type="match status" value="1"/>
</dbReference>